<sequence length="257" mass="27727">MVKSHIGGWILVLFVAAWSDIGLCKKRPKPGGGWNTGGSRYPGQGSPGGNRYPPQGGGGWGQPHGGGWGQPHGGGWGQPHGGGWGQPHGGGGWGQGGGSHGQWNKPSKPKTNMKHVAGAAAAGAVVGGLGGYMLGSAMSRPLIHFGSDYEDRYYRENMYRYPNQVYYRPVDQYSNQNSFVHDCVNITVKQHTVTTTTKGENFTETDVKMIERVVEQMCITQYQKEYEAYAQRGASVILFSSPPVILLISFLLFLIVG</sequence>
<name>PRIO_PIG</name>
<gene>
    <name type="primary">PRNP</name>
    <name type="synonym">PRP</name>
</gene>
<keyword id="KW-0002">3D-structure</keyword>
<keyword id="KW-0034">Amyloid</keyword>
<keyword id="KW-1003">Cell membrane</keyword>
<keyword id="KW-0186">Copper</keyword>
<keyword id="KW-1015">Disulfide bond</keyword>
<keyword id="KW-0325">Glycoprotein</keyword>
<keyword id="KW-0333">Golgi apparatus</keyword>
<keyword id="KW-0336">GPI-anchor</keyword>
<keyword id="KW-0449">Lipoprotein</keyword>
<keyword id="KW-0472">Membrane</keyword>
<keyword id="KW-0479">Metal-binding</keyword>
<keyword id="KW-0640">Prion</keyword>
<keyword id="KW-1185">Reference proteome</keyword>
<keyword id="KW-0677">Repeat</keyword>
<keyword id="KW-0732">Signal</keyword>
<keyword id="KW-0862">Zinc</keyword>
<organism>
    <name type="scientific">Sus scrofa</name>
    <name type="common">Pig</name>
    <dbReference type="NCBI Taxonomy" id="9823"/>
    <lineage>
        <taxon>Eukaryota</taxon>
        <taxon>Metazoa</taxon>
        <taxon>Chordata</taxon>
        <taxon>Craniata</taxon>
        <taxon>Vertebrata</taxon>
        <taxon>Euteleostomi</taxon>
        <taxon>Mammalia</taxon>
        <taxon>Eutheria</taxon>
        <taxon>Laurasiatheria</taxon>
        <taxon>Artiodactyla</taxon>
        <taxon>Suina</taxon>
        <taxon>Suidae</taxon>
        <taxon>Sus</taxon>
    </lineage>
</organism>
<protein>
    <recommendedName>
        <fullName>Major prion protein</fullName>
        <shortName>PrP</shortName>
    </recommendedName>
    <cdAntigenName>CD230</cdAntigenName>
</protein>
<accession>P49927</accession>
<feature type="signal peptide" evidence="3">
    <location>
        <begin position="1"/>
        <end position="24"/>
    </location>
</feature>
<feature type="chain" id="PRO_0000025715" description="Major prion protein">
    <location>
        <begin position="25"/>
        <end position="234"/>
    </location>
</feature>
<feature type="propeptide" id="PRO_0000025716" description="Removed in mature form" evidence="3">
    <location>
        <begin position="235"/>
        <end position="257"/>
    </location>
</feature>
<feature type="repeat" description="1">
    <location>
        <begin position="54"/>
        <end position="62"/>
    </location>
</feature>
<feature type="repeat" description="2">
    <location>
        <begin position="63"/>
        <end position="70"/>
    </location>
</feature>
<feature type="repeat" description="3">
    <location>
        <begin position="71"/>
        <end position="78"/>
    </location>
</feature>
<feature type="repeat" description="4">
    <location>
        <begin position="79"/>
        <end position="86"/>
    </location>
</feature>
<feature type="repeat" description="5">
    <location>
        <begin position="87"/>
        <end position="95"/>
    </location>
</feature>
<feature type="region of interest" description="Interaction with GRB2, ERI3 and SYN1" evidence="2">
    <location>
        <begin position="25"/>
        <end position="234"/>
    </location>
</feature>
<feature type="region of interest" description="Disordered" evidence="4">
    <location>
        <begin position="28"/>
        <end position="113"/>
    </location>
</feature>
<feature type="region of interest" description="5 X 8 AA tandem repeats of P-H-G-G-G-W-G-Q">
    <location>
        <begin position="54"/>
        <end position="95"/>
    </location>
</feature>
<feature type="compositionally biased region" description="Gly residues" evidence="4">
    <location>
        <begin position="55"/>
        <end position="100"/>
    </location>
</feature>
<feature type="binding site" evidence="1">
    <location>
        <position position="64"/>
    </location>
    <ligand>
        <name>Cu(2+)</name>
        <dbReference type="ChEBI" id="CHEBI:29036"/>
        <label>1</label>
    </ligand>
</feature>
<feature type="binding site" evidence="1">
    <location>
        <position position="65"/>
    </location>
    <ligand>
        <name>Cu(2+)</name>
        <dbReference type="ChEBI" id="CHEBI:29036"/>
        <label>1</label>
    </ligand>
</feature>
<feature type="binding site" evidence="1">
    <location>
        <position position="66"/>
    </location>
    <ligand>
        <name>Cu(2+)</name>
        <dbReference type="ChEBI" id="CHEBI:29036"/>
        <label>1</label>
    </ligand>
</feature>
<feature type="binding site" evidence="1">
    <location>
        <position position="72"/>
    </location>
    <ligand>
        <name>Cu(2+)</name>
        <dbReference type="ChEBI" id="CHEBI:29036"/>
        <label>2</label>
    </ligand>
</feature>
<feature type="binding site" evidence="1">
    <location>
        <position position="73"/>
    </location>
    <ligand>
        <name>Cu(2+)</name>
        <dbReference type="ChEBI" id="CHEBI:29036"/>
        <label>2</label>
    </ligand>
</feature>
<feature type="binding site" evidence="1">
    <location>
        <position position="74"/>
    </location>
    <ligand>
        <name>Cu(2+)</name>
        <dbReference type="ChEBI" id="CHEBI:29036"/>
        <label>2</label>
    </ligand>
</feature>
<feature type="binding site" evidence="1">
    <location>
        <position position="80"/>
    </location>
    <ligand>
        <name>Cu(2+)</name>
        <dbReference type="ChEBI" id="CHEBI:29036"/>
        <label>3</label>
    </ligand>
</feature>
<feature type="binding site" evidence="1">
    <location>
        <position position="81"/>
    </location>
    <ligand>
        <name>Cu(2+)</name>
        <dbReference type="ChEBI" id="CHEBI:29036"/>
        <label>3</label>
    </ligand>
</feature>
<feature type="binding site" evidence="1">
    <location>
        <position position="82"/>
    </location>
    <ligand>
        <name>Cu(2+)</name>
        <dbReference type="ChEBI" id="CHEBI:29036"/>
        <label>3</label>
    </ligand>
</feature>
<feature type="binding site" evidence="1">
    <location>
        <position position="88"/>
    </location>
    <ligand>
        <name>Cu(2+)</name>
        <dbReference type="ChEBI" id="CHEBI:29036"/>
        <label>4</label>
    </ligand>
</feature>
<feature type="binding site" evidence="1">
    <location>
        <position position="90"/>
    </location>
    <ligand>
        <name>Cu(2+)</name>
        <dbReference type="ChEBI" id="CHEBI:29036"/>
        <label>4</label>
    </ligand>
</feature>
<feature type="binding site" evidence="1">
    <location>
        <position position="91"/>
    </location>
    <ligand>
        <name>Cu(2+)</name>
        <dbReference type="ChEBI" id="CHEBI:29036"/>
        <label>4</label>
    </ligand>
</feature>
<feature type="lipid moiety-binding region" description="GPI-anchor amidated alanine" evidence="3">
    <location>
        <position position="234"/>
    </location>
</feature>
<feature type="glycosylation site" description="N-linked (GlcNAc...) asparagine" evidence="3">
    <location>
        <position position="185"/>
    </location>
</feature>
<feature type="glycosylation site" description="N-linked (GlcNAc...) asparagine" evidence="3">
    <location>
        <position position="201"/>
    </location>
</feature>
<feature type="disulfide bond" evidence="5">
    <location>
        <begin position="183"/>
        <end position="218"/>
    </location>
</feature>
<feature type="helix" evidence="7">
    <location>
        <begin position="150"/>
        <end position="153"/>
    </location>
</feature>
<feature type="helix" evidence="7">
    <location>
        <begin position="155"/>
        <end position="160"/>
    </location>
</feature>
<feature type="helix" evidence="7">
    <location>
        <begin position="177"/>
        <end position="196"/>
    </location>
</feature>
<feature type="helix" evidence="7">
    <location>
        <begin position="204"/>
        <end position="229"/>
    </location>
</feature>
<reference key="1">
    <citation type="journal article" date="1995" name="Biochim. Biophys. Acta">
        <title>Direct sequencing of PCR amplified pig PrP genes.</title>
        <authorList>
            <person name="Martin T."/>
            <person name="Hughes S."/>
            <person name="Hughes K."/>
            <person name="Dawson M."/>
        </authorList>
    </citation>
    <scope>NUCLEOTIDE SEQUENCE [GENOMIC DNA]</scope>
</reference>
<reference key="2">
    <citation type="journal article" date="2005" name="Proc. Natl. Acad. Sci. U.S.A.">
        <title>Prion protein NMR structures of cats, dogs, pigs, and sheep.</title>
        <authorList>
            <person name="Lysek D.A."/>
            <person name="Schorn C."/>
            <person name="Nivon L.G."/>
            <person name="Esteve-Moya V."/>
            <person name="Christen B."/>
            <person name="Calzolai L."/>
            <person name="von Schroetter C."/>
            <person name="Fiorito F."/>
            <person name="Herrmann T."/>
            <person name="Guentert P."/>
            <person name="Wuethrich K."/>
        </authorList>
    </citation>
    <scope>STRUCTURE BY NMR OF 125-235</scope>
    <scope>DISULFIDE BOND</scope>
</reference>
<dbReference type="EMBL" id="L07623">
    <property type="protein sequence ID" value="AAA92862.1"/>
    <property type="molecule type" value="Genomic_DNA"/>
</dbReference>
<dbReference type="RefSeq" id="NP_001008687.1">
    <property type="nucleotide sequence ID" value="NM_001008687.1"/>
</dbReference>
<dbReference type="RefSeq" id="XP_005672726.1">
    <property type="nucleotide sequence ID" value="XM_005672669.2"/>
</dbReference>
<dbReference type="RefSeq" id="XP_013840478.1">
    <property type="nucleotide sequence ID" value="XM_013985024.2"/>
</dbReference>
<dbReference type="RefSeq" id="XP_013840479.1">
    <property type="nucleotide sequence ID" value="XM_013985025.2"/>
</dbReference>
<dbReference type="PDB" id="1XYQ">
    <property type="method" value="NMR"/>
    <property type="chains" value="A=125-235"/>
</dbReference>
<dbReference type="PDBsum" id="1XYQ"/>
<dbReference type="BMRB" id="P49927"/>
<dbReference type="SMR" id="P49927"/>
<dbReference type="FunCoup" id="P49927">
    <property type="interactions" value="387"/>
</dbReference>
<dbReference type="IntAct" id="P49927">
    <property type="interactions" value="2"/>
</dbReference>
<dbReference type="STRING" id="9823.ENSSSCP00000065581"/>
<dbReference type="GlyCosmos" id="P49927">
    <property type="glycosylation" value="2 sites, No reported glycans"/>
</dbReference>
<dbReference type="GlyGen" id="P49927">
    <property type="glycosylation" value="2 sites"/>
</dbReference>
<dbReference type="PaxDb" id="9823-ENSSSCP00000007501"/>
<dbReference type="PeptideAtlas" id="P49927"/>
<dbReference type="ABCD" id="P49927">
    <property type="antibodies" value="2 sequenced antibodies"/>
</dbReference>
<dbReference type="Ensembl" id="ENSSSCT00000074204.1">
    <property type="protein sequence ID" value="ENSSSCP00000065581.1"/>
    <property type="gene ID" value="ENSSSCG00000048919.2"/>
</dbReference>
<dbReference type="Ensembl" id="ENSSSCT00000090661.2">
    <property type="protein sequence ID" value="ENSSSCP00000067112.2"/>
    <property type="gene ID" value="ENSSSCG00000048919.2"/>
</dbReference>
<dbReference type="Ensembl" id="ENSSSCT00015047326.1">
    <property type="protein sequence ID" value="ENSSSCP00015018718.1"/>
    <property type="gene ID" value="ENSSSCG00015035652.1"/>
</dbReference>
<dbReference type="Ensembl" id="ENSSSCT00015047394.1">
    <property type="protein sequence ID" value="ENSSSCP00015018759.1"/>
    <property type="gene ID" value="ENSSSCG00015035652.1"/>
</dbReference>
<dbReference type="Ensembl" id="ENSSSCT00025050350.1">
    <property type="protein sequence ID" value="ENSSSCP00025021495.1"/>
    <property type="gene ID" value="ENSSSCG00025037000.1"/>
</dbReference>
<dbReference type="Ensembl" id="ENSSSCT00025050363.1">
    <property type="protein sequence ID" value="ENSSSCP00025021501.1"/>
    <property type="gene ID" value="ENSSSCG00025037000.1"/>
</dbReference>
<dbReference type="Ensembl" id="ENSSSCT00030035933.1">
    <property type="protein sequence ID" value="ENSSSCP00030016409.1"/>
    <property type="gene ID" value="ENSSSCG00030025735.1"/>
</dbReference>
<dbReference type="Ensembl" id="ENSSSCT00035059569.1">
    <property type="protein sequence ID" value="ENSSSCP00035023953.1"/>
    <property type="gene ID" value="ENSSSCG00035044839.1"/>
</dbReference>
<dbReference type="Ensembl" id="ENSSSCT00035059581.1">
    <property type="protein sequence ID" value="ENSSSCP00035023962.1"/>
    <property type="gene ID" value="ENSSSCG00035044839.1"/>
</dbReference>
<dbReference type="Ensembl" id="ENSSSCT00040078436.1">
    <property type="protein sequence ID" value="ENSSSCP00040033828.1"/>
    <property type="gene ID" value="ENSSSCG00040057844.1"/>
</dbReference>
<dbReference type="Ensembl" id="ENSSSCT00045030673.1">
    <property type="protein sequence ID" value="ENSSSCP00045021264.1"/>
    <property type="gene ID" value="ENSSSCG00045018026.1"/>
</dbReference>
<dbReference type="Ensembl" id="ENSSSCT00045030724.1">
    <property type="protein sequence ID" value="ENSSSCP00045021303.1"/>
    <property type="gene ID" value="ENSSSCG00045018026.1"/>
</dbReference>
<dbReference type="Ensembl" id="ENSSSCT00050077719.1">
    <property type="protein sequence ID" value="ENSSSCP00050033444.1"/>
    <property type="gene ID" value="ENSSSCG00050057010.1"/>
</dbReference>
<dbReference type="Ensembl" id="ENSSSCT00050077722.1">
    <property type="protein sequence ID" value="ENSSSCP00050033447.1"/>
    <property type="gene ID" value="ENSSSCG00050057010.1"/>
</dbReference>
<dbReference type="Ensembl" id="ENSSSCT00055052966.1">
    <property type="protein sequence ID" value="ENSSSCP00055042278.1"/>
    <property type="gene ID" value="ENSSSCG00055026808.1"/>
</dbReference>
<dbReference type="Ensembl" id="ENSSSCT00055053039.1">
    <property type="protein sequence ID" value="ENSSSCP00055042335.1"/>
    <property type="gene ID" value="ENSSSCG00055026808.1"/>
</dbReference>
<dbReference type="Ensembl" id="ENSSSCT00070032471.1">
    <property type="protein sequence ID" value="ENSSSCP00070027105.1"/>
    <property type="gene ID" value="ENSSSCG00070016484.1"/>
</dbReference>
<dbReference type="Ensembl" id="ENSSSCT00070032479.1">
    <property type="protein sequence ID" value="ENSSSCP00070027111.1"/>
    <property type="gene ID" value="ENSSSCG00070016484.1"/>
</dbReference>
<dbReference type="Ensembl" id="ENSSSCT00085049080">
    <property type="protein sequence ID" value="ENSSSCP00085034420"/>
    <property type="gene ID" value="ENSSSCG00085025545"/>
</dbReference>
<dbReference type="Ensembl" id="ENSSSCT00085049098">
    <property type="protein sequence ID" value="ENSSSCP00085034432"/>
    <property type="gene ID" value="ENSSSCG00085025545"/>
</dbReference>
<dbReference type="Ensembl" id="ENSSSCT00090019198">
    <property type="protein sequence ID" value="ENSSSCP00090011861"/>
    <property type="gene ID" value="ENSSSCG00090010921"/>
</dbReference>
<dbReference type="Ensembl" id="ENSSSCT00090019209">
    <property type="protein sequence ID" value="ENSSSCP00090011864"/>
    <property type="gene ID" value="ENSSSCG00090010921"/>
</dbReference>
<dbReference type="Ensembl" id="ENSSSCT00105052371">
    <property type="protein sequence ID" value="ENSSSCP00105036839"/>
    <property type="gene ID" value="ENSSSCG00105027582"/>
</dbReference>
<dbReference type="Ensembl" id="ENSSSCT00105052423">
    <property type="protein sequence ID" value="ENSSSCP00105036868"/>
    <property type="gene ID" value="ENSSSCG00105027582"/>
</dbReference>
<dbReference type="Ensembl" id="ENSSSCT00110035069">
    <property type="protein sequence ID" value="ENSSSCP00110023897"/>
    <property type="gene ID" value="ENSSSCG00110018365"/>
</dbReference>
<dbReference type="Ensembl" id="ENSSSCT00110035081">
    <property type="protein sequence ID" value="ENSSSCP00110023907"/>
    <property type="gene ID" value="ENSSSCG00110018365"/>
</dbReference>
<dbReference type="Ensembl" id="ENSSSCT00115016636">
    <property type="protein sequence ID" value="ENSSSCP00115015695"/>
    <property type="gene ID" value="ENSSSCG00115009683"/>
</dbReference>
<dbReference type="Ensembl" id="ENSSSCT00130000980">
    <property type="protein sequence ID" value="ENSSSCP00130000692"/>
    <property type="gene ID" value="ENSSSCG00130000550"/>
</dbReference>
<dbReference type="Ensembl" id="ENSSSCT00130000983">
    <property type="protein sequence ID" value="ENSSSCP00130000695"/>
    <property type="gene ID" value="ENSSSCG00130000550"/>
</dbReference>
<dbReference type="GeneID" id="494014"/>
<dbReference type="KEGG" id="ssc:494014"/>
<dbReference type="CTD" id="5621"/>
<dbReference type="eggNOG" id="ENOG502S2A8">
    <property type="taxonomic scope" value="Eukaryota"/>
</dbReference>
<dbReference type="GeneTree" id="ENSGT00510000049083"/>
<dbReference type="HOGENOM" id="CLU_094631_0_0_1"/>
<dbReference type="InParanoid" id="P49927"/>
<dbReference type="OrthoDB" id="9048788at2759"/>
<dbReference type="TreeFam" id="TF105188"/>
<dbReference type="Reactome" id="R-SSC-9609523">
    <property type="pathway name" value="Insertion of tail-anchored proteins into the endoplasmic reticulum membrane"/>
</dbReference>
<dbReference type="EvolutionaryTrace" id="P49927"/>
<dbReference type="Proteomes" id="UP000008227">
    <property type="component" value="Chromosome 17"/>
</dbReference>
<dbReference type="Proteomes" id="UP000314985">
    <property type="component" value="Chromosome 17"/>
</dbReference>
<dbReference type="Proteomes" id="UP000694570">
    <property type="component" value="Unplaced"/>
</dbReference>
<dbReference type="Proteomes" id="UP000694571">
    <property type="component" value="Unplaced"/>
</dbReference>
<dbReference type="Proteomes" id="UP000694720">
    <property type="component" value="Unplaced"/>
</dbReference>
<dbReference type="Proteomes" id="UP000694722">
    <property type="component" value="Unplaced"/>
</dbReference>
<dbReference type="Proteomes" id="UP000694723">
    <property type="component" value="Unplaced"/>
</dbReference>
<dbReference type="Proteomes" id="UP000694724">
    <property type="component" value="Unplaced"/>
</dbReference>
<dbReference type="Proteomes" id="UP000694725">
    <property type="component" value="Unplaced"/>
</dbReference>
<dbReference type="Proteomes" id="UP000694726">
    <property type="component" value="Unplaced"/>
</dbReference>
<dbReference type="Proteomes" id="UP000694727">
    <property type="component" value="Unplaced"/>
</dbReference>
<dbReference type="Proteomes" id="UP000694728">
    <property type="component" value="Unplaced"/>
</dbReference>
<dbReference type="Bgee" id="ENSSSCG00000007039">
    <property type="expression patterns" value="Expressed in occipital cortex and 44 other cell types or tissues"/>
</dbReference>
<dbReference type="ExpressionAtlas" id="P49927">
    <property type="expression patterns" value="baseline and differential"/>
</dbReference>
<dbReference type="GO" id="GO:0009986">
    <property type="term" value="C:cell surface"/>
    <property type="evidence" value="ECO:0007669"/>
    <property type="project" value="Ensembl"/>
</dbReference>
<dbReference type="GO" id="GO:0005829">
    <property type="term" value="C:cytosol"/>
    <property type="evidence" value="ECO:0007669"/>
    <property type="project" value="Ensembl"/>
</dbReference>
<dbReference type="GO" id="GO:0030425">
    <property type="term" value="C:dendrite"/>
    <property type="evidence" value="ECO:0007669"/>
    <property type="project" value="Ensembl"/>
</dbReference>
<dbReference type="GO" id="GO:0005794">
    <property type="term" value="C:Golgi apparatus"/>
    <property type="evidence" value="ECO:0007669"/>
    <property type="project" value="UniProtKB-SubCell"/>
</dbReference>
<dbReference type="GO" id="GO:0016234">
    <property type="term" value="C:inclusion body"/>
    <property type="evidence" value="ECO:0007669"/>
    <property type="project" value="Ensembl"/>
</dbReference>
<dbReference type="GO" id="GO:0045121">
    <property type="term" value="C:membrane raft"/>
    <property type="evidence" value="ECO:0007669"/>
    <property type="project" value="Ensembl"/>
</dbReference>
<dbReference type="GO" id="GO:0031965">
    <property type="term" value="C:nuclear membrane"/>
    <property type="evidence" value="ECO:0007669"/>
    <property type="project" value="Ensembl"/>
</dbReference>
<dbReference type="GO" id="GO:0005886">
    <property type="term" value="C:plasma membrane"/>
    <property type="evidence" value="ECO:0007669"/>
    <property type="project" value="UniProtKB-SubCell"/>
</dbReference>
<dbReference type="GO" id="GO:0098552">
    <property type="term" value="C:side of membrane"/>
    <property type="evidence" value="ECO:0007669"/>
    <property type="project" value="UniProtKB-KW"/>
</dbReference>
<dbReference type="GO" id="GO:0001540">
    <property type="term" value="F:amyloid-beta binding"/>
    <property type="evidence" value="ECO:0007669"/>
    <property type="project" value="Ensembl"/>
</dbReference>
<dbReference type="GO" id="GO:0005507">
    <property type="term" value="F:copper ion binding"/>
    <property type="evidence" value="ECO:0000250"/>
    <property type="project" value="UniProtKB"/>
</dbReference>
<dbReference type="GO" id="GO:1903136">
    <property type="term" value="F:cuprous ion binding"/>
    <property type="evidence" value="ECO:0007669"/>
    <property type="project" value="Ensembl"/>
</dbReference>
<dbReference type="GO" id="GO:0042802">
    <property type="term" value="F:identical protein binding"/>
    <property type="evidence" value="ECO:0007669"/>
    <property type="project" value="Ensembl"/>
</dbReference>
<dbReference type="GO" id="GO:0008017">
    <property type="term" value="F:microtubule binding"/>
    <property type="evidence" value="ECO:0007669"/>
    <property type="project" value="Ensembl"/>
</dbReference>
<dbReference type="GO" id="GO:0140693">
    <property type="term" value="F:molecular condensate scaffold activity"/>
    <property type="evidence" value="ECO:0007669"/>
    <property type="project" value="Ensembl"/>
</dbReference>
<dbReference type="GO" id="GO:0044877">
    <property type="term" value="F:protein-containing complex binding"/>
    <property type="evidence" value="ECO:0007669"/>
    <property type="project" value="Ensembl"/>
</dbReference>
<dbReference type="GO" id="GO:0015631">
    <property type="term" value="F:tubulin binding"/>
    <property type="evidence" value="ECO:0000314"/>
    <property type="project" value="UniProtKB"/>
</dbReference>
<dbReference type="GO" id="GO:1904646">
    <property type="term" value="P:cellular response to amyloid-beta"/>
    <property type="evidence" value="ECO:0007669"/>
    <property type="project" value="Ensembl"/>
</dbReference>
<dbReference type="GO" id="GO:0071280">
    <property type="term" value="P:cellular response to copper ion"/>
    <property type="evidence" value="ECO:0007669"/>
    <property type="project" value="Ensembl"/>
</dbReference>
<dbReference type="GO" id="GO:0035556">
    <property type="term" value="P:intracellular signal transduction"/>
    <property type="evidence" value="ECO:0007669"/>
    <property type="project" value="Ensembl"/>
</dbReference>
<dbReference type="GO" id="GO:0050850">
    <property type="term" value="P:positive regulation of calcium-mediated signaling"/>
    <property type="evidence" value="ECO:0007669"/>
    <property type="project" value="Ensembl"/>
</dbReference>
<dbReference type="GO" id="GO:1900451">
    <property type="term" value="P:positive regulation of glutamate receptor signaling pathway"/>
    <property type="evidence" value="ECO:0007669"/>
    <property type="project" value="Ensembl"/>
</dbReference>
<dbReference type="GO" id="GO:0043525">
    <property type="term" value="P:positive regulation of neuron apoptotic process"/>
    <property type="evidence" value="ECO:0007669"/>
    <property type="project" value="Ensembl"/>
</dbReference>
<dbReference type="GO" id="GO:0031648">
    <property type="term" value="P:protein destabilization"/>
    <property type="evidence" value="ECO:0007669"/>
    <property type="project" value="Ensembl"/>
</dbReference>
<dbReference type="GO" id="GO:0051260">
    <property type="term" value="P:protein homooligomerization"/>
    <property type="evidence" value="ECO:0007669"/>
    <property type="project" value="InterPro"/>
</dbReference>
<dbReference type="FunFam" id="1.10.790.10:FF:000001">
    <property type="entry name" value="Major prion protein"/>
    <property type="match status" value="1"/>
</dbReference>
<dbReference type="Gene3D" id="1.10.790.10">
    <property type="entry name" value="Prion/Doppel protein, beta-ribbon domain"/>
    <property type="match status" value="1"/>
</dbReference>
<dbReference type="InterPro" id="IPR000817">
    <property type="entry name" value="Prion"/>
</dbReference>
<dbReference type="InterPro" id="IPR036924">
    <property type="entry name" value="Prion/Doppel_b-ribbon_dom_sf"/>
</dbReference>
<dbReference type="InterPro" id="IPR022416">
    <property type="entry name" value="Prion/Doppel_prot_b-ribbon_dom"/>
</dbReference>
<dbReference type="InterPro" id="IPR020949">
    <property type="entry name" value="Prion_copper_b_octapeptide"/>
</dbReference>
<dbReference type="InterPro" id="IPR025860">
    <property type="entry name" value="Prion_N"/>
</dbReference>
<dbReference type="PANTHER" id="PTHR15506">
    <property type="entry name" value="DOPPEL PRION"/>
    <property type="match status" value="1"/>
</dbReference>
<dbReference type="PANTHER" id="PTHR15506:SF2">
    <property type="entry name" value="MAJOR PRION PROTEIN"/>
    <property type="match status" value="1"/>
</dbReference>
<dbReference type="Pfam" id="PF00377">
    <property type="entry name" value="Prion"/>
    <property type="match status" value="1"/>
</dbReference>
<dbReference type="Pfam" id="PF11587">
    <property type="entry name" value="Prion_bPrPp"/>
    <property type="match status" value="1"/>
</dbReference>
<dbReference type="Pfam" id="PF03991">
    <property type="entry name" value="Prion_octapep"/>
    <property type="match status" value="1"/>
</dbReference>
<dbReference type="PRINTS" id="PR00341">
    <property type="entry name" value="PRION"/>
</dbReference>
<dbReference type="SMART" id="SM00157">
    <property type="entry name" value="PRP"/>
    <property type="match status" value="1"/>
</dbReference>
<dbReference type="SUPFAM" id="SSF54098">
    <property type="entry name" value="Prion-like"/>
    <property type="match status" value="1"/>
</dbReference>
<dbReference type="PROSITE" id="PS00291">
    <property type="entry name" value="PRION_1"/>
    <property type="match status" value="1"/>
</dbReference>
<dbReference type="PROSITE" id="PS00706">
    <property type="entry name" value="PRION_2"/>
    <property type="match status" value="1"/>
</dbReference>
<proteinExistence type="evidence at protein level"/>
<evidence type="ECO:0000250" key="1">
    <source>
        <dbReference type="UniProtKB" id="P04156"/>
    </source>
</evidence>
<evidence type="ECO:0000250" key="2">
    <source>
        <dbReference type="UniProtKB" id="P04925"/>
    </source>
</evidence>
<evidence type="ECO:0000255" key="3"/>
<evidence type="ECO:0000256" key="4">
    <source>
        <dbReference type="SAM" id="MobiDB-lite"/>
    </source>
</evidence>
<evidence type="ECO:0000269" key="5">
    <source>
    </source>
</evidence>
<evidence type="ECO:0000305" key="6"/>
<evidence type="ECO:0007829" key="7">
    <source>
        <dbReference type="PDB" id="1XYQ"/>
    </source>
</evidence>
<comment type="function">
    <text evidence="1 2">Its primary physiological function is unclear. Has cytoprotective activity against internal or environmental stresses. May play a role in neuronal development and synaptic plasticity. May be required for neuronal myelin sheath maintenance. May play a role in iron uptake and iron homeostasis. Soluble oligomers are toxic to cultured neuroblastoma cells and induce apoptosis (in vitro). Association with GPC1 (via its heparan sulfate chains) targets PRNP to lipid rafts. Also provides Cu(2+) or Zn(2+) for the ascorbate-mediated GPC1 deaminase degradation of its heparan sulfate side chains (By similarity).</text>
</comment>
<comment type="subunit">
    <text evidence="1 2">Monomer and homodimer. Has a tendency to aggregate into amyloid fibrils containing a cross-beta spine, formed by a steric zipper of superposed beta-strands. Soluble oligomers may represent an intermediate stage on the path to fibril formation. Copper binding may promote oligomerization. Interacts with GRB2, APP, ERI3/PRNPIP and SYN1. Mislocalized cytosolically exposed PrP interacts with MGRN1; this interaction alters MGRN1 subcellular location and causes lysosomal enlargement. Interacts with KIAA1191.</text>
</comment>
<comment type="subcellular location">
    <subcellularLocation>
        <location evidence="1">Cell membrane</location>
        <topology evidence="1">Lipid-anchor</topology>
        <topology evidence="1">GPI-anchor</topology>
    </subcellularLocation>
    <subcellularLocation>
        <location evidence="2">Golgi apparatus</location>
    </subcellularLocation>
    <text evidence="1">Targeted to lipid rafts via association with the heparan sulfate chains of GPC1. Colocates, in the presence of Cu(2+), to vesicles in para- and perinuclear regions, where both proteins undergo internalization. Heparin displaces PRNP from lipid rafts and promotes endocytosis.</text>
</comment>
<comment type="domain">
    <text evidence="1">The normal, monomeric form has a mainly alpha-helical structure. The disease-associated, protease-resistant form forms amyloid fibrils containing a cross-beta spine, formed by a steric zipper of superposed beta-strands. Disease mutations may favor intermolecular contacts via short beta strands, and may thereby trigger oligomerization.</text>
</comment>
<comment type="domain">
    <text evidence="1">Contains an N-terminal region composed of octamer repeats. At low copper concentrations, the sidechains of His residues from three or four repeats contribute to the binding of a single copper ion. Alternatively, a copper ion can be bound by interaction with the sidechain and backbone amide nitrogen of a single His residue. The observed copper binding stoichiometry suggests that two repeat regions cooperate to stabilize the binding of a single copper ion. At higher copper concentrations, each octamer can bind one copper ion by interactions with the His sidechain and Gly backbone atoms. A mixture of binding types may occur, especially in the case of octamer repeat expansion. Copper binding may stabilize the conformation of this region and may promote oligomerization.</text>
</comment>
<comment type="disease">
    <text evidence="6">Found in high quantity in the brain of humans and animals infected with degenerative neurological diseases such as kuru, Creutzfeldt-Jakob disease (CJD), Gerstmann-Straussler syndrome (GSS), scrapie, bovine spongiform encephalopathy (BSE), transmissible mink encephalopathy (TME), etc.</text>
</comment>
<comment type="similarity">
    <text evidence="6">Belongs to the prion family.</text>
</comment>